<protein>
    <recommendedName>
        <fullName>Phosphopantothenate--cysteine ligase</fullName>
        <ecNumber evidence="1 3">6.3.2.51</ecNumber>
    </recommendedName>
    <alternativeName>
        <fullName>Phosphopantothenoylcysteine synthetase</fullName>
        <shortName>PPC synthetase</shortName>
    </alternativeName>
</protein>
<organism>
    <name type="scientific">Homo sapiens</name>
    <name type="common">Human</name>
    <dbReference type="NCBI Taxonomy" id="9606"/>
    <lineage>
        <taxon>Eukaryota</taxon>
        <taxon>Metazoa</taxon>
        <taxon>Chordata</taxon>
        <taxon>Craniata</taxon>
        <taxon>Vertebrata</taxon>
        <taxon>Euteleostomi</taxon>
        <taxon>Mammalia</taxon>
        <taxon>Eutheria</taxon>
        <taxon>Euarchontoglires</taxon>
        <taxon>Primates</taxon>
        <taxon>Haplorrhini</taxon>
        <taxon>Catarrhini</taxon>
        <taxon>Hominidae</taxon>
        <taxon>Homo</taxon>
    </lineage>
</organism>
<dbReference type="EC" id="6.3.2.51" evidence="1 3"/>
<dbReference type="EMBL" id="AK021900">
    <property type="protein sequence ID" value="BAB13931.1"/>
    <property type="status" value="ALT_FRAME"/>
    <property type="molecule type" value="mRNA"/>
</dbReference>
<dbReference type="EMBL" id="AL445669">
    <property type="status" value="NOT_ANNOTATED_CDS"/>
    <property type="molecule type" value="Genomic_DNA"/>
</dbReference>
<dbReference type="EMBL" id="BC012383">
    <property type="status" value="NOT_ANNOTATED_CDS"/>
    <property type="molecule type" value="mRNA"/>
</dbReference>
<dbReference type="EMBL" id="BC104938">
    <property type="protein sequence ID" value="AAI04939.1"/>
    <property type="molecule type" value="mRNA"/>
</dbReference>
<dbReference type="EMBL" id="BC106064">
    <property type="protein sequence ID" value="AAI06065.1"/>
    <property type="molecule type" value="mRNA"/>
</dbReference>
<dbReference type="EMBL" id="BC112015">
    <property type="protein sequence ID" value="AAI12016.1"/>
    <property type="molecule type" value="mRNA"/>
</dbReference>
<dbReference type="CCDS" id="CCDS41311.1">
    <molecule id="Q9HAB8-1"/>
</dbReference>
<dbReference type="CCDS" id="CCDS41312.1">
    <molecule id="Q9HAB8-2"/>
</dbReference>
<dbReference type="RefSeq" id="NP_001070915.1">
    <molecule id="Q9HAB8-2"/>
    <property type="nucleotide sequence ID" value="NM_001077447.3"/>
</dbReference>
<dbReference type="RefSeq" id="NP_001274435.1">
    <molecule id="Q9HAB8-2"/>
    <property type="nucleotide sequence ID" value="NM_001287506.1"/>
</dbReference>
<dbReference type="RefSeq" id="NP_001274437.1">
    <molecule id="Q9HAB8-2"/>
    <property type="nucleotide sequence ID" value="NM_001287508.2"/>
</dbReference>
<dbReference type="RefSeq" id="NP_001274438.1">
    <molecule id="Q9HAB8-2"/>
    <property type="nucleotide sequence ID" value="NM_001287509.2"/>
</dbReference>
<dbReference type="RefSeq" id="NP_001274439.1">
    <molecule id="Q9HAB8-2"/>
    <property type="nucleotide sequence ID" value="NM_001287510.2"/>
</dbReference>
<dbReference type="RefSeq" id="NP_001274440.1">
    <property type="nucleotide sequence ID" value="NM_001287511.1"/>
</dbReference>
<dbReference type="RefSeq" id="NP_078940.2">
    <molecule id="Q9HAB8-1"/>
    <property type="nucleotide sequence ID" value="NM_024664.4"/>
</dbReference>
<dbReference type="PDB" id="1P9O">
    <property type="method" value="X-ray"/>
    <property type="resolution" value="2.30 A"/>
    <property type="chains" value="A/B=1-311"/>
</dbReference>
<dbReference type="PDB" id="7EDZ">
    <property type="method" value="X-ray"/>
    <property type="resolution" value="1.95 A"/>
    <property type="chains" value="A/B/C/D=1-311"/>
</dbReference>
<dbReference type="PDBsum" id="1P9O"/>
<dbReference type="PDBsum" id="7EDZ"/>
<dbReference type="SMR" id="Q9HAB8"/>
<dbReference type="BioGRID" id="122833">
    <property type="interactions" value="66"/>
</dbReference>
<dbReference type="FunCoup" id="Q9HAB8">
    <property type="interactions" value="3242"/>
</dbReference>
<dbReference type="IntAct" id="Q9HAB8">
    <property type="interactions" value="17"/>
</dbReference>
<dbReference type="STRING" id="9606.ENSP00000361642"/>
<dbReference type="GlyGen" id="Q9HAB8">
    <property type="glycosylation" value="1 site, 1 O-linked glycan (1 site)"/>
</dbReference>
<dbReference type="iPTMnet" id="Q9HAB8"/>
<dbReference type="PhosphoSitePlus" id="Q9HAB8"/>
<dbReference type="BioMuta" id="PPCS"/>
<dbReference type="DMDM" id="47117318"/>
<dbReference type="jPOST" id="Q9HAB8"/>
<dbReference type="MassIVE" id="Q9HAB8"/>
<dbReference type="PaxDb" id="9606-ENSP00000361642"/>
<dbReference type="PeptideAtlas" id="Q9HAB8"/>
<dbReference type="ProteomicsDB" id="65473"/>
<dbReference type="ProteomicsDB" id="81390">
    <molecule id="Q9HAB8-1"/>
</dbReference>
<dbReference type="Pumba" id="Q9HAB8"/>
<dbReference type="TopDownProteomics" id="Q9HAB8-1">
    <molecule id="Q9HAB8-1"/>
</dbReference>
<dbReference type="Antibodypedia" id="32205">
    <property type="antibodies" value="86 antibodies from 23 providers"/>
</dbReference>
<dbReference type="DNASU" id="79717"/>
<dbReference type="Ensembl" id="ENST00000372561.4">
    <molecule id="Q9HAB8-1"/>
    <property type="protein sequence ID" value="ENSP00000361642.3"/>
    <property type="gene ID" value="ENSG00000127125.9"/>
</dbReference>
<dbReference type="Ensembl" id="ENST00000372562.1">
    <molecule id="Q9HAB8-2"/>
    <property type="protein sequence ID" value="ENSP00000361643.1"/>
    <property type="gene ID" value="ENSG00000127125.9"/>
</dbReference>
<dbReference type="GeneID" id="79717"/>
<dbReference type="KEGG" id="hsa:79717"/>
<dbReference type="MANE-Select" id="ENST00000372561.4">
    <property type="protein sequence ID" value="ENSP00000361642.3"/>
    <property type="RefSeq nucleotide sequence ID" value="NM_024664.4"/>
    <property type="RefSeq protein sequence ID" value="NP_078940.2"/>
</dbReference>
<dbReference type="UCSC" id="uc001chl.5">
    <molecule id="Q9HAB8-1"/>
    <property type="organism name" value="human"/>
</dbReference>
<dbReference type="AGR" id="HGNC:25686"/>
<dbReference type="CTD" id="79717"/>
<dbReference type="DisGeNET" id="79717"/>
<dbReference type="GeneCards" id="PPCS"/>
<dbReference type="HGNC" id="HGNC:25686">
    <property type="gene designation" value="PPCS"/>
</dbReference>
<dbReference type="HPA" id="ENSG00000127125">
    <property type="expression patterns" value="Low tissue specificity"/>
</dbReference>
<dbReference type="MalaCards" id="PPCS"/>
<dbReference type="MIM" id="609853">
    <property type="type" value="gene"/>
</dbReference>
<dbReference type="MIM" id="618189">
    <property type="type" value="phenotype"/>
</dbReference>
<dbReference type="neXtProt" id="NX_Q9HAB8"/>
<dbReference type="OpenTargets" id="ENSG00000127125"/>
<dbReference type="Orphanet" id="154">
    <property type="disease" value="Familial isolated dilated cardiomyopathy"/>
</dbReference>
<dbReference type="PharmGKB" id="PA142671158"/>
<dbReference type="VEuPathDB" id="HostDB:ENSG00000127125"/>
<dbReference type="eggNOG" id="KOG2728">
    <property type="taxonomic scope" value="Eukaryota"/>
</dbReference>
<dbReference type="GeneTree" id="ENSGT00950000182834"/>
<dbReference type="HOGENOM" id="CLU_042326_3_0_1"/>
<dbReference type="InParanoid" id="Q9HAB8"/>
<dbReference type="OMA" id="LERYQHH"/>
<dbReference type="OrthoDB" id="70224at2759"/>
<dbReference type="PAN-GO" id="Q9HAB8">
    <property type="GO annotations" value="4 GO annotations based on evolutionary models"/>
</dbReference>
<dbReference type="PhylomeDB" id="Q9HAB8"/>
<dbReference type="TreeFam" id="TF105615"/>
<dbReference type="BioCyc" id="MetaCyc:HS13229-MONOMER"/>
<dbReference type="BRENDA" id="6.3.2.51">
    <property type="organism ID" value="2681"/>
</dbReference>
<dbReference type="PathwayCommons" id="Q9HAB8"/>
<dbReference type="Reactome" id="R-HSA-196783">
    <property type="pathway name" value="Coenzyme A biosynthesis"/>
</dbReference>
<dbReference type="SignaLink" id="Q9HAB8"/>
<dbReference type="UniPathway" id="UPA00241">
    <property type="reaction ID" value="UER00353"/>
</dbReference>
<dbReference type="BioGRID-ORCS" id="79717">
    <property type="hits" value="110 hits in 1159 CRISPR screens"/>
</dbReference>
<dbReference type="EvolutionaryTrace" id="Q9HAB8"/>
<dbReference type="GeneWiki" id="Phosphopantothenate%E2%80%94cysteine_ligase"/>
<dbReference type="GenomeRNAi" id="79717"/>
<dbReference type="Pharos" id="Q9HAB8">
    <property type="development level" value="Tbio"/>
</dbReference>
<dbReference type="PRO" id="PR:Q9HAB8"/>
<dbReference type="Proteomes" id="UP000005640">
    <property type="component" value="Chromosome 1"/>
</dbReference>
<dbReference type="RNAct" id="Q9HAB8">
    <property type="molecule type" value="protein"/>
</dbReference>
<dbReference type="Bgee" id="ENSG00000127125">
    <property type="expression patterns" value="Expressed in right adrenal gland cortex and 197 other cell types or tissues"/>
</dbReference>
<dbReference type="ExpressionAtlas" id="Q9HAB8">
    <property type="expression patterns" value="baseline and differential"/>
</dbReference>
<dbReference type="GO" id="GO:0005737">
    <property type="term" value="C:cytoplasm"/>
    <property type="evidence" value="ECO:0000318"/>
    <property type="project" value="GO_Central"/>
</dbReference>
<dbReference type="GO" id="GO:0005829">
    <property type="term" value="C:cytosol"/>
    <property type="evidence" value="ECO:0000304"/>
    <property type="project" value="Reactome"/>
</dbReference>
<dbReference type="GO" id="GO:0005634">
    <property type="term" value="C:nucleus"/>
    <property type="evidence" value="ECO:0000318"/>
    <property type="project" value="GO_Central"/>
</dbReference>
<dbReference type="GO" id="GO:0005524">
    <property type="term" value="F:ATP binding"/>
    <property type="evidence" value="ECO:0007669"/>
    <property type="project" value="UniProtKB-KW"/>
</dbReference>
<dbReference type="GO" id="GO:0042802">
    <property type="term" value="F:identical protein binding"/>
    <property type="evidence" value="ECO:0000353"/>
    <property type="project" value="IntAct"/>
</dbReference>
<dbReference type="GO" id="GO:0004632">
    <property type="term" value="F:phosphopantothenate--cysteine ligase activity"/>
    <property type="evidence" value="ECO:0000314"/>
    <property type="project" value="UniProtKB"/>
</dbReference>
<dbReference type="GO" id="GO:0042803">
    <property type="term" value="F:protein homodimerization activity"/>
    <property type="evidence" value="ECO:0000315"/>
    <property type="project" value="UniProtKB"/>
</dbReference>
<dbReference type="GO" id="GO:0006085">
    <property type="term" value="P:acetyl-CoA biosynthetic process"/>
    <property type="evidence" value="ECO:0000315"/>
    <property type="project" value="UniProtKB"/>
</dbReference>
<dbReference type="GO" id="GO:0015937">
    <property type="term" value="P:coenzyme A biosynthetic process"/>
    <property type="evidence" value="ECO:0000314"/>
    <property type="project" value="UniProtKB"/>
</dbReference>
<dbReference type="GO" id="GO:0003015">
    <property type="term" value="P:heart process"/>
    <property type="evidence" value="ECO:0000315"/>
    <property type="project" value="UniProtKB"/>
</dbReference>
<dbReference type="FunFam" id="3.40.50.10300:FF:000002">
    <property type="entry name" value="Phosphopantothenate--cysteine ligase 2"/>
    <property type="match status" value="1"/>
</dbReference>
<dbReference type="Gene3D" id="3.40.50.10300">
    <property type="entry name" value="CoaB-like"/>
    <property type="match status" value="1"/>
</dbReference>
<dbReference type="InterPro" id="IPR035929">
    <property type="entry name" value="CoaB-like_sf"/>
</dbReference>
<dbReference type="InterPro" id="IPR007085">
    <property type="entry name" value="DNA/pantothenate-metab_flavo_C"/>
</dbReference>
<dbReference type="PANTHER" id="PTHR12290">
    <property type="entry name" value="CORNICHON-RELATED"/>
    <property type="match status" value="1"/>
</dbReference>
<dbReference type="Pfam" id="PF04127">
    <property type="entry name" value="DFP"/>
    <property type="match status" value="2"/>
</dbReference>
<dbReference type="SUPFAM" id="SSF102645">
    <property type="entry name" value="CoaB-like"/>
    <property type="match status" value="1"/>
</dbReference>
<keyword id="KW-0002">3D-structure</keyword>
<keyword id="KW-0007">Acetylation</keyword>
<keyword id="KW-0025">Alternative splicing</keyword>
<keyword id="KW-0067">ATP-binding</keyword>
<keyword id="KW-0122">Cardiomyopathy</keyword>
<keyword id="KW-0225">Disease variant</keyword>
<keyword id="KW-0436">Ligase</keyword>
<keyword id="KW-0547">Nucleotide-binding</keyword>
<keyword id="KW-1267">Proteomics identification</keyword>
<keyword id="KW-1185">Reference proteome</keyword>
<sequence>MAEMDPVAEFPQPPGAARWAEVMARFAARLGAQGRRVVLVTSGGTKVPLEARPVRFLDNFSSGRRGATSAEAFLAAGYGVLFLYRARSAFPYAHRFPPQTWLSALRPSGPALSGLLSLEAEENALPGFAEALRSYQEAAAAGTFLAVEFTTLADYLHLLQAAAQALNPLGPSAMFYLAAAVSDFYVPVSEMPEHKIQSSGGPLQITMKMVPKLLSPLVKDWAPKAFIISFKLETDPAIVINRARKALEIYQHQVVVANILESRQSFVFIVTKDSETKLLLSEEEIEKGVEIEEKIVDNLQSRHTAFIGDRN</sequence>
<reference key="1">
    <citation type="journal article" date="2004" name="Nat. Genet.">
        <title>Complete sequencing and characterization of 21,243 full-length human cDNAs.</title>
        <authorList>
            <person name="Ota T."/>
            <person name="Suzuki Y."/>
            <person name="Nishikawa T."/>
            <person name="Otsuki T."/>
            <person name="Sugiyama T."/>
            <person name="Irie R."/>
            <person name="Wakamatsu A."/>
            <person name="Hayashi K."/>
            <person name="Sato H."/>
            <person name="Nagai K."/>
            <person name="Kimura K."/>
            <person name="Makita H."/>
            <person name="Sekine M."/>
            <person name="Obayashi M."/>
            <person name="Nishi T."/>
            <person name="Shibahara T."/>
            <person name="Tanaka T."/>
            <person name="Ishii S."/>
            <person name="Yamamoto J."/>
            <person name="Saito K."/>
            <person name="Kawai Y."/>
            <person name="Isono Y."/>
            <person name="Nakamura Y."/>
            <person name="Nagahari K."/>
            <person name="Murakami K."/>
            <person name="Yasuda T."/>
            <person name="Iwayanagi T."/>
            <person name="Wagatsuma M."/>
            <person name="Shiratori A."/>
            <person name="Sudo H."/>
            <person name="Hosoiri T."/>
            <person name="Kaku Y."/>
            <person name="Kodaira H."/>
            <person name="Kondo H."/>
            <person name="Sugawara M."/>
            <person name="Takahashi M."/>
            <person name="Kanda K."/>
            <person name="Yokoi T."/>
            <person name="Furuya T."/>
            <person name="Kikkawa E."/>
            <person name="Omura Y."/>
            <person name="Abe K."/>
            <person name="Kamihara K."/>
            <person name="Katsuta N."/>
            <person name="Sato K."/>
            <person name="Tanikawa M."/>
            <person name="Yamazaki M."/>
            <person name="Ninomiya K."/>
            <person name="Ishibashi T."/>
            <person name="Yamashita H."/>
            <person name="Murakawa K."/>
            <person name="Fujimori K."/>
            <person name="Tanai H."/>
            <person name="Kimata M."/>
            <person name="Watanabe M."/>
            <person name="Hiraoka S."/>
            <person name="Chiba Y."/>
            <person name="Ishida S."/>
            <person name="Ono Y."/>
            <person name="Takiguchi S."/>
            <person name="Watanabe S."/>
            <person name="Yosida M."/>
            <person name="Hotuta T."/>
            <person name="Kusano J."/>
            <person name="Kanehori K."/>
            <person name="Takahashi-Fujii A."/>
            <person name="Hara H."/>
            <person name="Tanase T.-O."/>
            <person name="Nomura Y."/>
            <person name="Togiya S."/>
            <person name="Komai F."/>
            <person name="Hara R."/>
            <person name="Takeuchi K."/>
            <person name="Arita M."/>
            <person name="Imose N."/>
            <person name="Musashino K."/>
            <person name="Yuuki H."/>
            <person name="Oshima A."/>
            <person name="Sasaki N."/>
            <person name="Aotsuka S."/>
            <person name="Yoshikawa Y."/>
            <person name="Matsunawa H."/>
            <person name="Ichihara T."/>
            <person name="Shiohata N."/>
            <person name="Sano S."/>
            <person name="Moriya S."/>
            <person name="Momiyama H."/>
            <person name="Satoh N."/>
            <person name="Takami S."/>
            <person name="Terashima Y."/>
            <person name="Suzuki O."/>
            <person name="Nakagawa S."/>
            <person name="Senoh A."/>
            <person name="Mizoguchi H."/>
            <person name="Goto Y."/>
            <person name="Shimizu F."/>
            <person name="Wakebe H."/>
            <person name="Hishigaki H."/>
            <person name="Watanabe T."/>
            <person name="Sugiyama A."/>
            <person name="Takemoto M."/>
            <person name="Kawakami B."/>
            <person name="Yamazaki M."/>
            <person name="Watanabe K."/>
            <person name="Kumagai A."/>
            <person name="Itakura S."/>
            <person name="Fukuzumi Y."/>
            <person name="Fujimori Y."/>
            <person name="Komiyama M."/>
            <person name="Tashiro H."/>
            <person name="Tanigami A."/>
            <person name="Fujiwara T."/>
            <person name="Ono T."/>
            <person name="Yamada K."/>
            <person name="Fujii Y."/>
            <person name="Ozaki K."/>
            <person name="Hirao M."/>
            <person name="Ohmori Y."/>
            <person name="Kawabata A."/>
            <person name="Hikiji T."/>
            <person name="Kobatake N."/>
            <person name="Inagaki H."/>
            <person name="Ikema Y."/>
            <person name="Okamoto S."/>
            <person name="Okitani R."/>
            <person name="Kawakami T."/>
            <person name="Noguchi S."/>
            <person name="Itoh T."/>
            <person name="Shigeta K."/>
            <person name="Senba T."/>
            <person name="Matsumura K."/>
            <person name="Nakajima Y."/>
            <person name="Mizuno T."/>
            <person name="Morinaga M."/>
            <person name="Sasaki M."/>
            <person name="Togashi T."/>
            <person name="Oyama M."/>
            <person name="Hata H."/>
            <person name="Watanabe M."/>
            <person name="Komatsu T."/>
            <person name="Mizushima-Sugano J."/>
            <person name="Satoh T."/>
            <person name="Shirai Y."/>
            <person name="Takahashi Y."/>
            <person name="Nakagawa K."/>
            <person name="Okumura K."/>
            <person name="Nagase T."/>
            <person name="Nomura N."/>
            <person name="Kikuchi H."/>
            <person name="Masuho Y."/>
            <person name="Yamashita R."/>
            <person name="Nakai K."/>
            <person name="Yada T."/>
            <person name="Nakamura Y."/>
            <person name="Ohara O."/>
            <person name="Isogai T."/>
            <person name="Sugano S."/>
        </authorList>
    </citation>
    <scope>NUCLEOTIDE SEQUENCE [LARGE SCALE MRNA] (ISOFORM 1)</scope>
    <source>
        <tissue>Embryo</tissue>
    </source>
</reference>
<reference key="2">
    <citation type="journal article" date="2006" name="Nature">
        <title>The DNA sequence and biological annotation of human chromosome 1.</title>
        <authorList>
            <person name="Gregory S.G."/>
            <person name="Barlow K.F."/>
            <person name="McLay K.E."/>
            <person name="Kaul R."/>
            <person name="Swarbreck D."/>
            <person name="Dunham A."/>
            <person name="Scott C.E."/>
            <person name="Howe K.L."/>
            <person name="Woodfine K."/>
            <person name="Spencer C.C.A."/>
            <person name="Jones M.C."/>
            <person name="Gillson C."/>
            <person name="Searle S."/>
            <person name="Zhou Y."/>
            <person name="Kokocinski F."/>
            <person name="McDonald L."/>
            <person name="Evans R."/>
            <person name="Phillips K."/>
            <person name="Atkinson A."/>
            <person name="Cooper R."/>
            <person name="Jones C."/>
            <person name="Hall R.E."/>
            <person name="Andrews T.D."/>
            <person name="Lloyd C."/>
            <person name="Ainscough R."/>
            <person name="Almeida J.P."/>
            <person name="Ambrose K.D."/>
            <person name="Anderson F."/>
            <person name="Andrew R.W."/>
            <person name="Ashwell R.I.S."/>
            <person name="Aubin K."/>
            <person name="Babbage A.K."/>
            <person name="Bagguley C.L."/>
            <person name="Bailey J."/>
            <person name="Beasley H."/>
            <person name="Bethel G."/>
            <person name="Bird C.P."/>
            <person name="Bray-Allen S."/>
            <person name="Brown J.Y."/>
            <person name="Brown A.J."/>
            <person name="Buckley D."/>
            <person name="Burton J."/>
            <person name="Bye J."/>
            <person name="Carder C."/>
            <person name="Chapman J.C."/>
            <person name="Clark S.Y."/>
            <person name="Clarke G."/>
            <person name="Clee C."/>
            <person name="Cobley V."/>
            <person name="Collier R.E."/>
            <person name="Corby N."/>
            <person name="Coville G.J."/>
            <person name="Davies J."/>
            <person name="Deadman R."/>
            <person name="Dunn M."/>
            <person name="Earthrowl M."/>
            <person name="Ellington A.G."/>
            <person name="Errington H."/>
            <person name="Frankish A."/>
            <person name="Frankland J."/>
            <person name="French L."/>
            <person name="Garner P."/>
            <person name="Garnett J."/>
            <person name="Gay L."/>
            <person name="Ghori M.R.J."/>
            <person name="Gibson R."/>
            <person name="Gilby L.M."/>
            <person name="Gillett W."/>
            <person name="Glithero R.J."/>
            <person name="Grafham D.V."/>
            <person name="Griffiths C."/>
            <person name="Griffiths-Jones S."/>
            <person name="Grocock R."/>
            <person name="Hammond S."/>
            <person name="Harrison E.S.I."/>
            <person name="Hart E."/>
            <person name="Haugen E."/>
            <person name="Heath P.D."/>
            <person name="Holmes S."/>
            <person name="Holt K."/>
            <person name="Howden P.J."/>
            <person name="Hunt A.R."/>
            <person name="Hunt S.E."/>
            <person name="Hunter G."/>
            <person name="Isherwood J."/>
            <person name="James R."/>
            <person name="Johnson C."/>
            <person name="Johnson D."/>
            <person name="Joy A."/>
            <person name="Kay M."/>
            <person name="Kershaw J.K."/>
            <person name="Kibukawa M."/>
            <person name="Kimberley A.M."/>
            <person name="King A."/>
            <person name="Knights A.J."/>
            <person name="Lad H."/>
            <person name="Laird G."/>
            <person name="Lawlor S."/>
            <person name="Leongamornlert D.A."/>
            <person name="Lloyd D.M."/>
            <person name="Loveland J."/>
            <person name="Lovell J."/>
            <person name="Lush M.J."/>
            <person name="Lyne R."/>
            <person name="Martin S."/>
            <person name="Mashreghi-Mohammadi M."/>
            <person name="Matthews L."/>
            <person name="Matthews N.S.W."/>
            <person name="McLaren S."/>
            <person name="Milne S."/>
            <person name="Mistry S."/>
            <person name="Moore M.J.F."/>
            <person name="Nickerson T."/>
            <person name="O'Dell C.N."/>
            <person name="Oliver K."/>
            <person name="Palmeiri A."/>
            <person name="Palmer S.A."/>
            <person name="Parker A."/>
            <person name="Patel D."/>
            <person name="Pearce A.V."/>
            <person name="Peck A.I."/>
            <person name="Pelan S."/>
            <person name="Phelps K."/>
            <person name="Phillimore B.J."/>
            <person name="Plumb R."/>
            <person name="Rajan J."/>
            <person name="Raymond C."/>
            <person name="Rouse G."/>
            <person name="Saenphimmachak C."/>
            <person name="Sehra H.K."/>
            <person name="Sheridan E."/>
            <person name="Shownkeen R."/>
            <person name="Sims S."/>
            <person name="Skuce C.D."/>
            <person name="Smith M."/>
            <person name="Steward C."/>
            <person name="Subramanian S."/>
            <person name="Sycamore N."/>
            <person name="Tracey A."/>
            <person name="Tromans A."/>
            <person name="Van Helmond Z."/>
            <person name="Wall M."/>
            <person name="Wallis J.M."/>
            <person name="White S."/>
            <person name="Whitehead S.L."/>
            <person name="Wilkinson J.E."/>
            <person name="Willey D.L."/>
            <person name="Williams H."/>
            <person name="Wilming L."/>
            <person name="Wray P.W."/>
            <person name="Wu Z."/>
            <person name="Coulson A."/>
            <person name="Vaudin M."/>
            <person name="Sulston J.E."/>
            <person name="Durbin R.M."/>
            <person name="Hubbard T."/>
            <person name="Wooster R."/>
            <person name="Dunham I."/>
            <person name="Carter N.P."/>
            <person name="McVean G."/>
            <person name="Ross M.T."/>
            <person name="Harrow J."/>
            <person name="Olson M.V."/>
            <person name="Beck S."/>
            <person name="Rogers J."/>
            <person name="Bentley D.R."/>
        </authorList>
    </citation>
    <scope>NUCLEOTIDE SEQUENCE [LARGE SCALE GENOMIC DNA]</scope>
</reference>
<reference key="3">
    <citation type="journal article" date="2004" name="Genome Res.">
        <title>The status, quality, and expansion of the NIH full-length cDNA project: the Mammalian Gene Collection (MGC).</title>
        <authorList>
            <consortium name="The MGC Project Team"/>
        </authorList>
    </citation>
    <scope>NUCLEOTIDE SEQUENCE [LARGE SCALE MRNA] (ISOFORMS 1 AND 2)</scope>
    <source>
        <tissue>Brain</tissue>
        <tissue>Ovary tumor</tissue>
        <tissue>Uterus</tissue>
    </source>
</reference>
<reference key="4">
    <citation type="journal article" date="2002" name="J. Biol. Chem.">
        <title>Complete reconstitution of the human coenzyme A biosynthetic pathway via comparative genomics.</title>
        <authorList>
            <person name="Daugherty M."/>
            <person name="Polanuyer B."/>
            <person name="Farrell M."/>
            <person name="Scholle M."/>
            <person name="Lykidis A."/>
            <person name="de Crecy-Lagard V."/>
            <person name="Osterman A."/>
        </authorList>
    </citation>
    <scope>FUNCTION</scope>
    <scope>CATALYTIC ACTIVITY</scope>
    <scope>PATHWAY</scope>
</reference>
<reference key="5">
    <citation type="journal article" date="2011" name="BMC Syst. Biol.">
        <title>Initial characterization of the human central proteome.</title>
        <authorList>
            <person name="Burkard T.R."/>
            <person name="Planyavsky M."/>
            <person name="Kaupe I."/>
            <person name="Breitwieser F.P."/>
            <person name="Buerckstuemmer T."/>
            <person name="Bennett K.L."/>
            <person name="Superti-Furga G."/>
            <person name="Colinge J."/>
        </authorList>
    </citation>
    <scope>IDENTIFICATION BY MASS SPECTROMETRY [LARGE SCALE ANALYSIS]</scope>
</reference>
<reference key="6">
    <citation type="journal article" date="2012" name="Mol. Cell. Proteomics">
        <title>Comparative large-scale characterisation of plant vs. mammal proteins reveals similar and idiosyncratic N-alpha acetylation features.</title>
        <authorList>
            <person name="Bienvenut W.V."/>
            <person name="Sumpton D."/>
            <person name="Martinez A."/>
            <person name="Lilla S."/>
            <person name="Espagne C."/>
            <person name="Meinnel T."/>
            <person name="Giglione C."/>
        </authorList>
    </citation>
    <scope>ACETYLATION [LARGE SCALE ANALYSIS] AT ALA-2</scope>
    <scope>CLEAVAGE OF INITIATOR METHIONINE [LARGE SCALE ANALYSIS]</scope>
    <scope>IDENTIFICATION BY MASS SPECTROMETRY [LARGE SCALE ANALYSIS]</scope>
</reference>
<reference key="7">
    <citation type="journal article" date="2012" name="Proc. Natl. Acad. Sci. U.S.A.">
        <title>N-terminal acetylome analyses and functional insights of the N-terminal acetyltransferase NatB.</title>
        <authorList>
            <person name="Van Damme P."/>
            <person name="Lasa M."/>
            <person name="Polevoda B."/>
            <person name="Gazquez C."/>
            <person name="Elosegui-Artola A."/>
            <person name="Kim D.S."/>
            <person name="De Juan-Pardo E."/>
            <person name="Demeyer K."/>
            <person name="Hole K."/>
            <person name="Larrea E."/>
            <person name="Timmerman E."/>
            <person name="Prieto J."/>
            <person name="Arnesen T."/>
            <person name="Sherman F."/>
            <person name="Gevaert K."/>
            <person name="Aldabe R."/>
        </authorList>
    </citation>
    <scope>ACETYLATION [LARGE SCALE ANALYSIS] AT ALA-2</scope>
    <scope>CLEAVAGE OF INITIATOR METHIONINE [LARGE SCALE ANALYSIS]</scope>
    <scope>IDENTIFICATION BY MASS SPECTROMETRY [LARGE SCALE ANALYSIS]</scope>
</reference>
<reference key="8">
    <citation type="journal article" date="2014" name="J. Proteomics">
        <title>An enzyme assisted RP-RPLC approach for in-depth analysis of human liver phosphoproteome.</title>
        <authorList>
            <person name="Bian Y."/>
            <person name="Song C."/>
            <person name="Cheng K."/>
            <person name="Dong M."/>
            <person name="Wang F."/>
            <person name="Huang J."/>
            <person name="Sun D."/>
            <person name="Wang L."/>
            <person name="Ye M."/>
            <person name="Zou H."/>
        </authorList>
    </citation>
    <scope>IDENTIFICATION BY MASS SPECTROMETRY [LARGE SCALE ANALYSIS]</scope>
    <source>
        <tissue>Liver</tissue>
    </source>
</reference>
<reference key="9">
    <citation type="journal article" date="2003" name="Structure">
        <title>Structure of human phosphopantothenoylcysteine synthetase at 2.3 A resolution.</title>
        <authorList>
            <person name="Manoj N."/>
            <person name="Strauss E."/>
            <person name="Begley T.P."/>
            <person name="Ealick S.E."/>
        </authorList>
    </citation>
    <scope>X-RAY CRYSTALLOGRAPHY (2.3 ANGSTROMS)</scope>
    <scope>FUNCTION</scope>
    <scope>HOMODIMERIZATION</scope>
</reference>
<reference key="10">
    <citation type="journal article" date="2018" name="Am. J. Hum. Genet.">
        <title>Mutations in PPCS, encoding phosphopantothenoylcysteine synthetase, cause autosomal-recessive dilated cardiomyopathy.</title>
        <authorList>
            <person name="Iuso A."/>
            <person name="Wiersma M."/>
            <person name="Schueller H.J."/>
            <person name="Pode-Shakked B."/>
            <person name="Marek-Yagel D."/>
            <person name="Grigat M."/>
            <person name="Schwarzmayr T."/>
            <person name="Berutti R."/>
            <person name="Alhaddad B."/>
            <person name="Kanon B."/>
            <person name="Grzeschik N.A."/>
            <person name="Okun J.G."/>
            <person name="Perles Z."/>
            <person name="Salem Y."/>
            <person name="Barel O."/>
            <person name="Vardi A."/>
            <person name="Rubinshtein M."/>
            <person name="Tirosh T."/>
            <person name="Dubnov-Raz G."/>
            <person name="Messias A.C."/>
            <person name="Terrile C."/>
            <person name="Barshack I."/>
            <person name="Volkov A."/>
            <person name="Avivi C."/>
            <person name="Eyal E."/>
            <person name="Mastantuono E."/>
            <person name="Kumbar M."/>
            <person name="Abudi S."/>
            <person name="Braunisch M."/>
            <person name="Strom T.M."/>
            <person name="Meitinger T."/>
            <person name="Hoffmann G.F."/>
            <person name="Prokisch H."/>
            <person name="Haack T.B."/>
            <person name="Brundel B.J.J.M."/>
            <person name="Haas D."/>
            <person name="Sibon O.C.M."/>
            <person name="Anikster Y."/>
        </authorList>
    </citation>
    <scope>VARIANTS CMD2C 107-PRO--ALA-111 DEL; PRO-180 AND VAL-233</scope>
    <scope>CHARACTERIZATION OF VARIANTS CMD2C 107-PRO--ALA-111 DEL; PRO-180 AND VAL-233</scope>
    <scope>INVOLVEMENT IN CMD2C</scope>
    <scope>FUNCTION</scope>
    <scope>CATALYTIC ACTIVITY</scope>
    <scope>PATHWAY</scope>
    <scope>HOMODIMERIZATION</scope>
</reference>
<evidence type="ECO:0000269" key="1">
    <source>
    </source>
</evidence>
<evidence type="ECO:0000269" key="2">
    <source>
    </source>
</evidence>
<evidence type="ECO:0000269" key="3">
    <source>
    </source>
</evidence>
<evidence type="ECO:0000303" key="4">
    <source>
    </source>
</evidence>
<evidence type="ECO:0000305" key="5"/>
<evidence type="ECO:0000305" key="6">
    <source>
    </source>
</evidence>
<evidence type="ECO:0007744" key="7">
    <source>
    </source>
</evidence>
<evidence type="ECO:0007744" key="8">
    <source>
    </source>
</evidence>
<evidence type="ECO:0007829" key="9">
    <source>
        <dbReference type="PDB" id="1P9O"/>
    </source>
</evidence>
<evidence type="ECO:0007829" key="10">
    <source>
        <dbReference type="PDB" id="7EDZ"/>
    </source>
</evidence>
<feature type="initiator methionine" description="Removed" evidence="7 8">
    <location>
        <position position="1"/>
    </location>
</feature>
<feature type="chain" id="PRO_0000182040" description="Phosphopantothenate--cysteine ligase">
    <location>
        <begin position="2"/>
        <end position="311"/>
    </location>
</feature>
<feature type="modified residue" description="N-acetylalanine" evidence="7 8">
    <location>
        <position position="2"/>
    </location>
</feature>
<feature type="splice variant" id="VSP_045796" description="In isoform 2." evidence="4">
    <location>
        <begin position="1"/>
        <end position="173"/>
    </location>
</feature>
<feature type="sequence variant" id="VAR_081990" description="In CMD2C; decreased phosphopantothenate--cysteine ligase activity; decreased protein abundance in patient fibroblasts." evidence="3">
    <location>
        <begin position="107"/>
        <end position="111"/>
    </location>
</feature>
<feature type="sequence variant" id="VAR_081991" description="In CMD2C; loss of phosphopantothenate--cysteine ligase activity; decreased protein abundance in patient fibroblasts; dbSNP:rs1557776329." evidence="3">
    <original>A</original>
    <variation>P</variation>
    <location>
        <position position="180"/>
    </location>
</feature>
<feature type="sequence variant" id="VAR_081992" description="In CMD2C; decreased phosphopantothenate--cysteine ligase activity; decreased protein abundance in patient fibroblasts; dbSNP:rs1557778277." evidence="3">
    <original>E</original>
    <variation>V</variation>
    <location>
        <position position="233"/>
    </location>
</feature>
<feature type="helix" evidence="10">
    <location>
        <begin position="16"/>
        <end position="32"/>
    </location>
</feature>
<feature type="strand" evidence="10">
    <location>
        <begin position="37"/>
        <end position="44"/>
    </location>
</feature>
<feature type="strand" evidence="10">
    <location>
        <begin position="46"/>
        <end position="52"/>
    </location>
</feature>
<feature type="strand" evidence="10">
    <location>
        <begin position="56"/>
        <end position="58"/>
    </location>
</feature>
<feature type="helix" evidence="10">
    <location>
        <begin position="64"/>
        <end position="75"/>
    </location>
</feature>
<feature type="strand" evidence="10">
    <location>
        <begin position="79"/>
        <end position="85"/>
    </location>
</feature>
<feature type="helix" evidence="10">
    <location>
        <begin position="93"/>
        <end position="95"/>
    </location>
</feature>
<feature type="helix" evidence="10">
    <location>
        <begin position="98"/>
        <end position="104"/>
    </location>
</feature>
<feature type="strand" evidence="10">
    <location>
        <begin position="106"/>
        <end position="110"/>
    </location>
</feature>
<feature type="strand" evidence="9">
    <location>
        <begin position="114"/>
        <end position="121"/>
    </location>
</feature>
<feature type="helix" evidence="10">
    <location>
        <begin position="122"/>
        <end position="124"/>
    </location>
</feature>
<feature type="helix" evidence="10">
    <location>
        <begin position="128"/>
        <end position="141"/>
    </location>
</feature>
<feature type="strand" evidence="10">
    <location>
        <begin position="144"/>
        <end position="149"/>
    </location>
</feature>
<feature type="helix" evidence="10">
    <location>
        <begin position="152"/>
        <end position="166"/>
    </location>
</feature>
<feature type="helix" evidence="10">
    <location>
        <begin position="167"/>
        <end position="172"/>
    </location>
</feature>
<feature type="strand" evidence="10">
    <location>
        <begin position="173"/>
        <end position="177"/>
    </location>
</feature>
<feature type="strand" evidence="10">
    <location>
        <begin position="183"/>
        <end position="185"/>
    </location>
</feature>
<feature type="helix" evidence="10">
    <location>
        <begin position="188"/>
        <end position="190"/>
    </location>
</feature>
<feature type="helix" evidence="10">
    <location>
        <begin position="198"/>
        <end position="200"/>
    </location>
</feature>
<feature type="strand" evidence="9">
    <location>
        <begin position="203"/>
        <end position="206"/>
    </location>
</feature>
<feature type="helix" evidence="10">
    <location>
        <begin position="214"/>
        <end position="219"/>
    </location>
</feature>
<feature type="strand" evidence="10">
    <location>
        <begin position="225"/>
        <end position="234"/>
    </location>
</feature>
<feature type="turn" evidence="10">
    <location>
        <begin position="236"/>
        <end position="238"/>
    </location>
</feature>
<feature type="helix" evidence="10">
    <location>
        <begin position="239"/>
        <end position="250"/>
    </location>
</feature>
<feature type="strand" evidence="10">
    <location>
        <begin position="253"/>
        <end position="259"/>
    </location>
</feature>
<feature type="helix" evidence="10">
    <location>
        <begin position="260"/>
        <end position="262"/>
    </location>
</feature>
<feature type="turn" evidence="10">
    <location>
        <begin position="263"/>
        <end position="265"/>
    </location>
</feature>
<feature type="strand" evidence="10">
    <location>
        <begin position="266"/>
        <end position="270"/>
    </location>
</feature>
<feature type="strand" evidence="10">
    <location>
        <begin position="275"/>
        <end position="279"/>
    </location>
</feature>
<feature type="helix" evidence="10">
    <location>
        <begin position="282"/>
        <end position="286"/>
    </location>
</feature>
<feature type="helix" evidence="10">
    <location>
        <begin position="291"/>
        <end position="308"/>
    </location>
</feature>
<proteinExistence type="evidence at protein level"/>
<comment type="function">
    <text evidence="1 2 3">Catalyzes the second step in the biosynthesis of coenzyme A from vitamin B5, where cysteine is conjugated to 4'-phosphopantothenate to form 4-phosphopantothenoylcysteine (PubMed:11923312, PubMed:12906824, PubMed:29754768). Has a preference for ATP over CTP as a cosubstrate (PubMed:11923312).</text>
</comment>
<comment type="catalytic activity">
    <reaction evidence="1 3">
        <text>(R)-4'-phosphopantothenate + L-cysteine + ATP = N-[(R)-4-phosphopantothenoyl]-L-cysteine + AMP + diphosphate + H(+)</text>
        <dbReference type="Rhea" id="RHEA:25156"/>
        <dbReference type="ChEBI" id="CHEBI:10986"/>
        <dbReference type="ChEBI" id="CHEBI:15378"/>
        <dbReference type="ChEBI" id="CHEBI:30616"/>
        <dbReference type="ChEBI" id="CHEBI:33019"/>
        <dbReference type="ChEBI" id="CHEBI:35235"/>
        <dbReference type="ChEBI" id="CHEBI:59458"/>
        <dbReference type="ChEBI" id="CHEBI:456215"/>
        <dbReference type="EC" id="6.3.2.51"/>
    </reaction>
    <physiologicalReaction direction="left-to-right" evidence="6">
        <dbReference type="Rhea" id="RHEA:25157"/>
    </physiologicalReaction>
</comment>
<comment type="catalytic activity">
    <reaction evidence="1">
        <text>(R)-4'-phosphopantothenate + L-cysteine + CTP = N-[(R)-4-phosphopantothenoyl]-L-cysteine + CMP + diphosphate + H(+)</text>
        <dbReference type="Rhea" id="RHEA:19397"/>
        <dbReference type="ChEBI" id="CHEBI:10986"/>
        <dbReference type="ChEBI" id="CHEBI:15378"/>
        <dbReference type="ChEBI" id="CHEBI:33019"/>
        <dbReference type="ChEBI" id="CHEBI:35235"/>
        <dbReference type="ChEBI" id="CHEBI:37563"/>
        <dbReference type="ChEBI" id="CHEBI:59458"/>
        <dbReference type="ChEBI" id="CHEBI:60377"/>
    </reaction>
    <physiologicalReaction direction="left-to-right" evidence="6">
        <dbReference type="Rhea" id="RHEA:19398"/>
    </physiologicalReaction>
</comment>
<comment type="pathway">
    <text evidence="1 3">Cofactor biosynthesis; coenzyme A biosynthesis; CoA from (R)-pantothenate: step 2/5.</text>
</comment>
<comment type="subunit">
    <text evidence="2 3">Homodimer.</text>
</comment>
<comment type="interaction">
    <interactant intactId="EBI-2827176">
        <id>Q9HAB8</id>
    </interactant>
    <interactant intactId="EBI-2827176">
        <id>Q9HAB8</id>
        <label>PPCS</label>
    </interactant>
    <organismsDiffer>false</organismsDiffer>
    <experiments>3</experiments>
</comment>
<comment type="alternative products">
    <event type="alternative splicing"/>
    <isoform>
        <id>Q9HAB8-1</id>
        <name>1</name>
        <sequence type="displayed"/>
    </isoform>
    <isoform>
        <id>Q9HAB8-2</id>
        <name>2</name>
        <sequence type="described" ref="VSP_045796"/>
    </isoform>
</comment>
<comment type="disease" evidence="3">
    <disease id="DI-05389">
        <name>Cardiomyopathy, dilated, 2C</name>
        <acronym>CMD2C</acronym>
        <description>A form of dilated cardiomyopathy, a disorder characterized by ventricular dilation and impaired systolic function, resulting in congestive heart failure and arrhythmia. Patients are at risk of premature death. CMD2C is an autosomal recessive form with variable severity and age of onset ranging from 2 to 20 years. Death in infancy or early childhood may occur in severely affected children.</description>
        <dbReference type="MIM" id="618189"/>
    </disease>
    <text>The disease is caused by variants affecting the gene represented in this entry.</text>
</comment>
<comment type="similarity">
    <text evidence="5">Belongs to the PPC synthetase family.</text>
</comment>
<comment type="sequence caution" evidence="5">
    <conflict type="frameshift">
        <sequence resource="EMBL-CDS" id="BAB13931"/>
    </conflict>
</comment>
<accession>Q9HAB8</accession>
<accession>Q3KQT2</accession>
<accession>Q5VVM0</accession>
<gene>
    <name type="primary">PPCS</name>
    <name type="synonym">COAB</name>
</gene>
<name>PPCS_HUMAN</name>